<accession>A5EXJ7</accession>
<name>ATPA_DICNV</name>
<organism>
    <name type="scientific">Dichelobacter nodosus (strain VCS1703A)</name>
    <dbReference type="NCBI Taxonomy" id="246195"/>
    <lineage>
        <taxon>Bacteria</taxon>
        <taxon>Pseudomonadati</taxon>
        <taxon>Pseudomonadota</taxon>
        <taxon>Gammaproteobacteria</taxon>
        <taxon>Cardiobacteriales</taxon>
        <taxon>Cardiobacteriaceae</taxon>
        <taxon>Dichelobacter</taxon>
    </lineage>
</organism>
<protein>
    <recommendedName>
        <fullName evidence="1">ATP synthase subunit alpha</fullName>
        <ecNumber evidence="1">7.1.2.2</ecNumber>
    </recommendedName>
    <alternativeName>
        <fullName evidence="1">ATP synthase F1 sector subunit alpha</fullName>
    </alternativeName>
    <alternativeName>
        <fullName evidence="1">F-ATPase subunit alpha</fullName>
    </alternativeName>
</protein>
<feature type="chain" id="PRO_0000339030" description="ATP synthase subunit alpha">
    <location>
        <begin position="1"/>
        <end position="513"/>
    </location>
</feature>
<feature type="binding site" evidence="1">
    <location>
        <begin position="169"/>
        <end position="176"/>
    </location>
    <ligand>
        <name>ATP</name>
        <dbReference type="ChEBI" id="CHEBI:30616"/>
    </ligand>
</feature>
<feature type="site" description="Required for activity" evidence="1">
    <location>
        <position position="373"/>
    </location>
</feature>
<proteinExistence type="inferred from homology"/>
<keyword id="KW-0066">ATP synthesis</keyword>
<keyword id="KW-0067">ATP-binding</keyword>
<keyword id="KW-0997">Cell inner membrane</keyword>
<keyword id="KW-1003">Cell membrane</keyword>
<keyword id="KW-0139">CF(1)</keyword>
<keyword id="KW-0375">Hydrogen ion transport</keyword>
<keyword id="KW-0406">Ion transport</keyword>
<keyword id="KW-0472">Membrane</keyword>
<keyword id="KW-0547">Nucleotide-binding</keyword>
<keyword id="KW-1185">Reference proteome</keyword>
<keyword id="KW-1278">Translocase</keyword>
<keyword id="KW-0813">Transport</keyword>
<gene>
    <name evidence="1" type="primary">atpA</name>
    <name type="ordered locus">DNO_1144</name>
</gene>
<sequence length="513" mass="55295">MQLNASEISSFIKDKIADYDNKVENKAEGTIVNVSDGIVQIQGLSQAMLGEMIELPNGNFALAMNLERDSVGAVVLGAYEHLREGDKVHCTGRILEVPVGRGLLGRVVDALGNPIDGKGKIDAEGSSPVEKIAPGVIERQSVDQPLQTGLKAIDSMVPLGRGQRELIIGDRQTGKTAIAIDAIINQKNTGVICIYVAIGQKASSIASVVRKLEEADALKHTIVVAASASTSAAMQYIAPYSGCAMGEFFRDRGEDALIIYDDLTKQAWAYRQVSLLLRRPPGREAYPGDVFYLHSRLLERAARINAKEVERLTAGKVKGKTGSLTALPIIETQAGDVSAFVPTNVISITDGQIFLETDLFNSGIRPAINAGLSVSRVGGAAQTQIIKKLGGGIRLALAQYRELAAFAQFASDLDEATRKQLEHGQRVTELMKQKQYAPLSVAEMAISLFAADKGYLDTVAVEDIMAYETALLSFMRENHADLMNTINTTGKYDEAVQTGLKEALDAFVEKRSL</sequence>
<evidence type="ECO:0000255" key="1">
    <source>
        <dbReference type="HAMAP-Rule" id="MF_01346"/>
    </source>
</evidence>
<comment type="function">
    <text evidence="1">Produces ATP from ADP in the presence of a proton gradient across the membrane. The alpha chain is a regulatory subunit.</text>
</comment>
<comment type="catalytic activity">
    <reaction evidence="1">
        <text>ATP + H2O + 4 H(+)(in) = ADP + phosphate + 5 H(+)(out)</text>
        <dbReference type="Rhea" id="RHEA:57720"/>
        <dbReference type="ChEBI" id="CHEBI:15377"/>
        <dbReference type="ChEBI" id="CHEBI:15378"/>
        <dbReference type="ChEBI" id="CHEBI:30616"/>
        <dbReference type="ChEBI" id="CHEBI:43474"/>
        <dbReference type="ChEBI" id="CHEBI:456216"/>
        <dbReference type="EC" id="7.1.2.2"/>
    </reaction>
</comment>
<comment type="subunit">
    <text evidence="1">F-type ATPases have 2 components, CF(1) - the catalytic core - and CF(0) - the membrane proton channel. CF(1) has five subunits: alpha(3), beta(3), gamma(1), delta(1), epsilon(1). CF(0) has three main subunits: a(1), b(2) and c(9-12). The alpha and beta chains form an alternating ring which encloses part of the gamma chain. CF(1) is attached to CF(0) by a central stalk formed by the gamma and epsilon chains, while a peripheral stalk is formed by the delta and b chains.</text>
</comment>
<comment type="subcellular location">
    <subcellularLocation>
        <location evidence="1">Cell inner membrane</location>
        <topology evidence="1">Peripheral membrane protein</topology>
    </subcellularLocation>
</comment>
<comment type="similarity">
    <text evidence="1">Belongs to the ATPase alpha/beta chains family.</text>
</comment>
<dbReference type="EC" id="7.1.2.2" evidence="1"/>
<dbReference type="EMBL" id="CP000513">
    <property type="protein sequence ID" value="ABQ14078.1"/>
    <property type="molecule type" value="Genomic_DNA"/>
</dbReference>
<dbReference type="RefSeq" id="WP_012031448.1">
    <property type="nucleotide sequence ID" value="NC_009446.1"/>
</dbReference>
<dbReference type="SMR" id="A5EXJ7"/>
<dbReference type="STRING" id="246195.DNO_1144"/>
<dbReference type="KEGG" id="dno:DNO_1144"/>
<dbReference type="eggNOG" id="COG0056">
    <property type="taxonomic scope" value="Bacteria"/>
</dbReference>
<dbReference type="HOGENOM" id="CLU_010091_2_1_6"/>
<dbReference type="OrthoDB" id="9803053at2"/>
<dbReference type="Proteomes" id="UP000000248">
    <property type="component" value="Chromosome"/>
</dbReference>
<dbReference type="GO" id="GO:0005886">
    <property type="term" value="C:plasma membrane"/>
    <property type="evidence" value="ECO:0007669"/>
    <property type="project" value="UniProtKB-SubCell"/>
</dbReference>
<dbReference type="GO" id="GO:0045259">
    <property type="term" value="C:proton-transporting ATP synthase complex"/>
    <property type="evidence" value="ECO:0007669"/>
    <property type="project" value="UniProtKB-KW"/>
</dbReference>
<dbReference type="GO" id="GO:0043531">
    <property type="term" value="F:ADP binding"/>
    <property type="evidence" value="ECO:0007669"/>
    <property type="project" value="TreeGrafter"/>
</dbReference>
<dbReference type="GO" id="GO:0005524">
    <property type="term" value="F:ATP binding"/>
    <property type="evidence" value="ECO:0007669"/>
    <property type="project" value="UniProtKB-UniRule"/>
</dbReference>
<dbReference type="GO" id="GO:0046933">
    <property type="term" value="F:proton-transporting ATP synthase activity, rotational mechanism"/>
    <property type="evidence" value="ECO:0007669"/>
    <property type="project" value="UniProtKB-UniRule"/>
</dbReference>
<dbReference type="CDD" id="cd18113">
    <property type="entry name" value="ATP-synt_F1_alpha_C"/>
    <property type="match status" value="1"/>
</dbReference>
<dbReference type="CDD" id="cd18116">
    <property type="entry name" value="ATP-synt_F1_alpha_N"/>
    <property type="match status" value="1"/>
</dbReference>
<dbReference type="CDD" id="cd01132">
    <property type="entry name" value="F1-ATPase_alpha_CD"/>
    <property type="match status" value="1"/>
</dbReference>
<dbReference type="FunFam" id="1.20.150.20:FF:000001">
    <property type="entry name" value="ATP synthase subunit alpha"/>
    <property type="match status" value="1"/>
</dbReference>
<dbReference type="FunFam" id="2.40.30.20:FF:000001">
    <property type="entry name" value="ATP synthase subunit alpha"/>
    <property type="match status" value="1"/>
</dbReference>
<dbReference type="FunFam" id="3.40.50.300:FF:000002">
    <property type="entry name" value="ATP synthase subunit alpha"/>
    <property type="match status" value="1"/>
</dbReference>
<dbReference type="Gene3D" id="2.40.30.20">
    <property type="match status" value="1"/>
</dbReference>
<dbReference type="Gene3D" id="1.20.150.20">
    <property type="entry name" value="ATP synthase alpha/beta chain, C-terminal domain"/>
    <property type="match status" value="1"/>
</dbReference>
<dbReference type="Gene3D" id="3.40.50.300">
    <property type="entry name" value="P-loop containing nucleotide triphosphate hydrolases"/>
    <property type="match status" value="1"/>
</dbReference>
<dbReference type="HAMAP" id="MF_01346">
    <property type="entry name" value="ATP_synth_alpha_bact"/>
    <property type="match status" value="1"/>
</dbReference>
<dbReference type="InterPro" id="IPR023366">
    <property type="entry name" value="ATP_synth_asu-like_sf"/>
</dbReference>
<dbReference type="InterPro" id="IPR000793">
    <property type="entry name" value="ATP_synth_asu_C"/>
</dbReference>
<dbReference type="InterPro" id="IPR038376">
    <property type="entry name" value="ATP_synth_asu_C_sf"/>
</dbReference>
<dbReference type="InterPro" id="IPR033732">
    <property type="entry name" value="ATP_synth_F1_a_nt-bd_dom"/>
</dbReference>
<dbReference type="InterPro" id="IPR005294">
    <property type="entry name" value="ATP_synth_F1_asu"/>
</dbReference>
<dbReference type="InterPro" id="IPR020003">
    <property type="entry name" value="ATPase_a/bsu_AS"/>
</dbReference>
<dbReference type="InterPro" id="IPR004100">
    <property type="entry name" value="ATPase_F1/V1/A1_a/bsu_N"/>
</dbReference>
<dbReference type="InterPro" id="IPR036121">
    <property type="entry name" value="ATPase_F1/V1/A1_a/bsu_N_sf"/>
</dbReference>
<dbReference type="InterPro" id="IPR000194">
    <property type="entry name" value="ATPase_F1/V1/A1_a/bsu_nucl-bd"/>
</dbReference>
<dbReference type="InterPro" id="IPR027417">
    <property type="entry name" value="P-loop_NTPase"/>
</dbReference>
<dbReference type="NCBIfam" id="TIGR00962">
    <property type="entry name" value="atpA"/>
    <property type="match status" value="1"/>
</dbReference>
<dbReference type="NCBIfam" id="NF009884">
    <property type="entry name" value="PRK13343.1"/>
    <property type="match status" value="1"/>
</dbReference>
<dbReference type="PANTHER" id="PTHR48082">
    <property type="entry name" value="ATP SYNTHASE SUBUNIT ALPHA, MITOCHONDRIAL"/>
    <property type="match status" value="1"/>
</dbReference>
<dbReference type="PANTHER" id="PTHR48082:SF2">
    <property type="entry name" value="ATP SYNTHASE SUBUNIT ALPHA, MITOCHONDRIAL"/>
    <property type="match status" value="1"/>
</dbReference>
<dbReference type="Pfam" id="PF00006">
    <property type="entry name" value="ATP-synt_ab"/>
    <property type="match status" value="1"/>
</dbReference>
<dbReference type="Pfam" id="PF00306">
    <property type="entry name" value="ATP-synt_ab_C"/>
    <property type="match status" value="1"/>
</dbReference>
<dbReference type="Pfam" id="PF02874">
    <property type="entry name" value="ATP-synt_ab_N"/>
    <property type="match status" value="1"/>
</dbReference>
<dbReference type="PIRSF" id="PIRSF039088">
    <property type="entry name" value="F_ATPase_subunit_alpha"/>
    <property type="match status" value="1"/>
</dbReference>
<dbReference type="SUPFAM" id="SSF47917">
    <property type="entry name" value="C-terminal domain of alpha and beta subunits of F1 ATP synthase"/>
    <property type="match status" value="1"/>
</dbReference>
<dbReference type="SUPFAM" id="SSF50615">
    <property type="entry name" value="N-terminal domain of alpha and beta subunits of F1 ATP synthase"/>
    <property type="match status" value="1"/>
</dbReference>
<dbReference type="SUPFAM" id="SSF52540">
    <property type="entry name" value="P-loop containing nucleoside triphosphate hydrolases"/>
    <property type="match status" value="1"/>
</dbReference>
<dbReference type="PROSITE" id="PS00152">
    <property type="entry name" value="ATPASE_ALPHA_BETA"/>
    <property type="match status" value="1"/>
</dbReference>
<reference key="1">
    <citation type="journal article" date="2007" name="Nat. Biotechnol.">
        <title>Genome sequence and identification of candidate vaccine antigens from the animal pathogen Dichelobacter nodosus.</title>
        <authorList>
            <person name="Myers G.S.A."/>
            <person name="Parker D."/>
            <person name="Al-Hasani K."/>
            <person name="Kennan R.M."/>
            <person name="Seemann T."/>
            <person name="Ren Q."/>
            <person name="Badger J.H."/>
            <person name="Selengut J.D."/>
            <person name="Deboy R.T."/>
            <person name="Tettelin H."/>
            <person name="Boyce J.D."/>
            <person name="McCarl V.P."/>
            <person name="Han X."/>
            <person name="Nelson W.C."/>
            <person name="Madupu R."/>
            <person name="Mohamoud Y."/>
            <person name="Holley T."/>
            <person name="Fedorova N."/>
            <person name="Khouri H."/>
            <person name="Bottomley S.P."/>
            <person name="Whittington R.J."/>
            <person name="Adler B."/>
            <person name="Songer J.G."/>
            <person name="Rood J.I."/>
            <person name="Paulsen I.T."/>
        </authorList>
    </citation>
    <scope>NUCLEOTIDE SEQUENCE [LARGE SCALE GENOMIC DNA]</scope>
    <source>
        <strain>VCS1703A</strain>
    </source>
</reference>